<organism>
    <name type="scientific">Serratia ficaria</name>
    <dbReference type="NCBI Taxonomy" id="61651"/>
    <lineage>
        <taxon>Bacteria</taxon>
        <taxon>Pseudomonadati</taxon>
        <taxon>Pseudomonadota</taxon>
        <taxon>Gammaproteobacteria</taxon>
        <taxon>Enterobacterales</taxon>
        <taxon>Yersiniaceae</taxon>
        <taxon>Serratia</taxon>
    </lineage>
</organism>
<protein>
    <recommendedName>
        <fullName evidence="1">Chaperonin GroEL</fullName>
        <ecNumber evidence="1">5.6.1.7</ecNumber>
    </recommendedName>
    <alternativeName>
        <fullName evidence="1">60 kDa chaperonin</fullName>
    </alternativeName>
    <alternativeName>
        <fullName evidence="1">Chaperonin-60</fullName>
        <shortName evidence="1">Cpn60</shortName>
    </alternativeName>
</protein>
<reference key="1">
    <citation type="journal article" date="1997" name="J. Gen. Appl. Microbiol.">
        <title>Phylogenetical relationship based on groE genes among phenotypically related Enterobacter, Pantoea, Klebsiella, Serratia, and Erwinia species.</title>
        <authorList>
            <person name="Harada H."/>
            <person name="Ishikawa H."/>
        </authorList>
    </citation>
    <scope>NUCLEOTIDE SEQUENCE [GENOMIC DNA]</scope>
    <source>
        <strain>ATCC 33105 / DSM 4569 / JCM 1241 / LMG 7881 / NCTC 12148 / 4024</strain>
    </source>
</reference>
<accession>O66204</accession>
<name>CH60_SERFI</name>
<proteinExistence type="inferred from homology"/>
<feature type="chain" id="PRO_0000063524" description="Chaperonin GroEL">
    <location>
        <begin position="1"/>
        <end position="540" status="greater than"/>
    </location>
</feature>
<feature type="binding site" evidence="1">
    <location>
        <begin position="30"/>
        <end position="33"/>
    </location>
    <ligand>
        <name>ATP</name>
        <dbReference type="ChEBI" id="CHEBI:30616"/>
    </ligand>
</feature>
<feature type="binding site" evidence="1">
    <location>
        <position position="51"/>
    </location>
    <ligand>
        <name>ATP</name>
        <dbReference type="ChEBI" id="CHEBI:30616"/>
    </ligand>
</feature>
<feature type="binding site" evidence="1">
    <location>
        <begin position="87"/>
        <end position="91"/>
    </location>
    <ligand>
        <name>ATP</name>
        <dbReference type="ChEBI" id="CHEBI:30616"/>
    </ligand>
</feature>
<feature type="binding site" evidence="1">
    <location>
        <position position="415"/>
    </location>
    <ligand>
        <name>ATP</name>
        <dbReference type="ChEBI" id="CHEBI:30616"/>
    </ligand>
</feature>
<feature type="binding site" evidence="1">
    <location>
        <position position="495"/>
    </location>
    <ligand>
        <name>ATP</name>
        <dbReference type="ChEBI" id="CHEBI:30616"/>
    </ligand>
</feature>
<feature type="non-terminal residue">
    <location>
        <position position="540"/>
    </location>
</feature>
<comment type="function">
    <text evidence="1">Together with its co-chaperonin GroES, plays an essential role in assisting protein folding. The GroEL-GroES system forms a nano-cage that allows encapsulation of the non-native substrate proteins and provides a physical environment optimized to promote and accelerate protein folding.</text>
</comment>
<comment type="catalytic activity">
    <reaction evidence="1">
        <text>ATP + H2O + a folded polypeptide = ADP + phosphate + an unfolded polypeptide.</text>
        <dbReference type="EC" id="5.6.1.7"/>
    </reaction>
</comment>
<comment type="subunit">
    <text evidence="1">Forms a cylinder of 14 subunits composed of two heptameric rings stacked back-to-back. Interacts with the co-chaperonin GroES.</text>
</comment>
<comment type="subcellular location">
    <subcellularLocation>
        <location evidence="1">Cytoplasm</location>
    </subcellularLocation>
</comment>
<comment type="similarity">
    <text evidence="1">Belongs to the chaperonin (HSP60) family.</text>
</comment>
<sequence length="540" mass="56628">MAAKDVKFGNDARVKMLRGVNVLADAVKVTLGPKGRNVVLDKSFGAPTITKDGVSVAREIELEDKFENMGAQMVKEVASKANDAAGDGTTTATVLAQSIITEGLKAVAAGMNPMDLKRGIDKAVVAAVEELKKLSVPCSDSKAIAQVGTISANSDETVGKLIAEAMEKVGKEGVITVEEGTGLQDELDVVEGMQFDRGYLSPYFINKPETGSVELESPFILLADKKISNIRELLPVLEAVAKAGKPLLIVAEDVEGEALATLVVNTMRGIVKVAAVKAPGFGDRRKAMLQDIATLTAGTVISEEIGLELEKATLEDLGQAKRVVINKDTTIIIDGVGDEATIQGRVTQIRQQIEEATSDYDREKLQERVAKLAGGVAVIKVGAATEVEMKEKKARVEDALHATRAAVEEGVVAGGGVALIRVAGKIAGLKGDNEDQNVGIKVALRAMESPLRQIVINAGEEASVIANNVKAGEGSYGYNAYSEEYGDMIAMGILDPTKVTRSALQYAASVAGLMITTECMVTDLPKADAPDLXGAGGMGG</sequence>
<dbReference type="EC" id="5.6.1.7" evidence="1"/>
<dbReference type="EMBL" id="AB008144">
    <property type="protein sequence ID" value="BAA25221.1"/>
    <property type="molecule type" value="Genomic_DNA"/>
</dbReference>
<dbReference type="STRING" id="1411141.GCA_001590885_04694"/>
<dbReference type="GO" id="GO:0005737">
    <property type="term" value="C:cytoplasm"/>
    <property type="evidence" value="ECO:0007669"/>
    <property type="project" value="UniProtKB-SubCell"/>
</dbReference>
<dbReference type="GO" id="GO:0005524">
    <property type="term" value="F:ATP binding"/>
    <property type="evidence" value="ECO:0007669"/>
    <property type="project" value="UniProtKB-KW"/>
</dbReference>
<dbReference type="GO" id="GO:0140662">
    <property type="term" value="F:ATP-dependent protein folding chaperone"/>
    <property type="evidence" value="ECO:0007669"/>
    <property type="project" value="InterPro"/>
</dbReference>
<dbReference type="GO" id="GO:0016853">
    <property type="term" value="F:isomerase activity"/>
    <property type="evidence" value="ECO:0007669"/>
    <property type="project" value="UniProtKB-KW"/>
</dbReference>
<dbReference type="GO" id="GO:0042026">
    <property type="term" value="P:protein refolding"/>
    <property type="evidence" value="ECO:0007669"/>
    <property type="project" value="InterPro"/>
</dbReference>
<dbReference type="CDD" id="cd03344">
    <property type="entry name" value="GroEL"/>
    <property type="match status" value="1"/>
</dbReference>
<dbReference type="FunFam" id="1.10.560.10:FF:000001">
    <property type="entry name" value="60 kDa chaperonin"/>
    <property type="match status" value="1"/>
</dbReference>
<dbReference type="FunFam" id="3.50.7.10:FF:000001">
    <property type="entry name" value="60 kDa chaperonin"/>
    <property type="match status" value="1"/>
</dbReference>
<dbReference type="Gene3D" id="3.50.7.10">
    <property type="entry name" value="GroEL"/>
    <property type="match status" value="1"/>
</dbReference>
<dbReference type="Gene3D" id="1.10.560.10">
    <property type="entry name" value="GroEL-like equatorial domain"/>
    <property type="match status" value="1"/>
</dbReference>
<dbReference type="Gene3D" id="3.30.260.10">
    <property type="entry name" value="TCP-1-like chaperonin intermediate domain"/>
    <property type="match status" value="1"/>
</dbReference>
<dbReference type="HAMAP" id="MF_00600">
    <property type="entry name" value="CH60"/>
    <property type="match status" value="1"/>
</dbReference>
<dbReference type="InterPro" id="IPR018370">
    <property type="entry name" value="Chaperonin_Cpn60_CS"/>
</dbReference>
<dbReference type="InterPro" id="IPR001844">
    <property type="entry name" value="Cpn60/GroEL"/>
</dbReference>
<dbReference type="InterPro" id="IPR002423">
    <property type="entry name" value="Cpn60/GroEL/TCP-1"/>
</dbReference>
<dbReference type="InterPro" id="IPR027409">
    <property type="entry name" value="GroEL-like_apical_dom_sf"/>
</dbReference>
<dbReference type="InterPro" id="IPR027413">
    <property type="entry name" value="GROEL-like_equatorial_sf"/>
</dbReference>
<dbReference type="InterPro" id="IPR027410">
    <property type="entry name" value="TCP-1-like_intermed_sf"/>
</dbReference>
<dbReference type="NCBIfam" id="TIGR02348">
    <property type="entry name" value="GroEL"/>
    <property type="match status" value="1"/>
</dbReference>
<dbReference type="NCBIfam" id="NF000592">
    <property type="entry name" value="PRK00013.1"/>
    <property type="match status" value="1"/>
</dbReference>
<dbReference type="NCBIfam" id="NF009487">
    <property type="entry name" value="PRK12849.1"/>
    <property type="match status" value="1"/>
</dbReference>
<dbReference type="NCBIfam" id="NF009488">
    <property type="entry name" value="PRK12850.1"/>
    <property type="match status" value="1"/>
</dbReference>
<dbReference type="NCBIfam" id="NF009489">
    <property type="entry name" value="PRK12851.1"/>
    <property type="match status" value="1"/>
</dbReference>
<dbReference type="PANTHER" id="PTHR45633">
    <property type="entry name" value="60 KDA HEAT SHOCK PROTEIN, MITOCHONDRIAL"/>
    <property type="match status" value="1"/>
</dbReference>
<dbReference type="Pfam" id="PF00118">
    <property type="entry name" value="Cpn60_TCP1"/>
    <property type="match status" value="1"/>
</dbReference>
<dbReference type="PRINTS" id="PR00298">
    <property type="entry name" value="CHAPERONIN60"/>
</dbReference>
<dbReference type="SUPFAM" id="SSF52029">
    <property type="entry name" value="GroEL apical domain-like"/>
    <property type="match status" value="1"/>
</dbReference>
<dbReference type="SUPFAM" id="SSF48592">
    <property type="entry name" value="GroEL equatorial domain-like"/>
    <property type="match status" value="1"/>
</dbReference>
<dbReference type="SUPFAM" id="SSF54849">
    <property type="entry name" value="GroEL-intermediate domain like"/>
    <property type="match status" value="1"/>
</dbReference>
<dbReference type="PROSITE" id="PS00296">
    <property type="entry name" value="CHAPERONINS_CPN60"/>
    <property type="match status" value="1"/>
</dbReference>
<evidence type="ECO:0000255" key="1">
    <source>
        <dbReference type="HAMAP-Rule" id="MF_00600"/>
    </source>
</evidence>
<gene>
    <name evidence="1" type="primary">groEL</name>
    <name evidence="1" type="synonym">groL</name>
    <name type="synonym">mopA</name>
</gene>
<keyword id="KW-0067">ATP-binding</keyword>
<keyword id="KW-0143">Chaperone</keyword>
<keyword id="KW-0963">Cytoplasm</keyword>
<keyword id="KW-0413">Isomerase</keyword>
<keyword id="KW-0547">Nucleotide-binding</keyword>